<reference key="1">
    <citation type="journal article" date="2004" name="Toxicon">
        <title>Cloning and purification of alpha-neurotoxins from king cobra (Ophiophagus hannah).</title>
        <authorList>
            <person name="He Y.-Y."/>
            <person name="Lee W.-H."/>
            <person name="Zhang Y."/>
        </authorList>
    </citation>
    <scope>NUCLEOTIDE SEQUENCE [MRNA]</scope>
    <source>
        <tissue>Venom gland</tissue>
    </source>
</reference>
<protein>
    <recommendedName>
        <fullName>Weak neurotoxin OH-72</fullName>
    </recommendedName>
</protein>
<keyword id="KW-0008">Acetylcholine receptor inhibiting toxin</keyword>
<keyword id="KW-1015">Disulfide bond</keyword>
<keyword id="KW-0872">Ion channel impairing toxin</keyword>
<keyword id="KW-0528">Neurotoxin</keyword>
<keyword id="KW-0629">Postsynaptic neurotoxin</keyword>
<keyword id="KW-0964">Secreted</keyword>
<keyword id="KW-0732">Signal</keyword>
<keyword id="KW-0800">Toxin</keyword>
<dbReference type="EMBL" id="AY596925">
    <property type="protein sequence ID" value="AAT97247.1"/>
    <property type="molecule type" value="mRNA"/>
</dbReference>
<dbReference type="SMR" id="Q53B61"/>
<dbReference type="GO" id="GO:0005576">
    <property type="term" value="C:extracellular region"/>
    <property type="evidence" value="ECO:0007669"/>
    <property type="project" value="UniProtKB-SubCell"/>
</dbReference>
<dbReference type="GO" id="GO:0030550">
    <property type="term" value="F:acetylcholine receptor inhibitor activity"/>
    <property type="evidence" value="ECO:0007669"/>
    <property type="project" value="UniProtKB-KW"/>
</dbReference>
<dbReference type="GO" id="GO:0099106">
    <property type="term" value="F:ion channel regulator activity"/>
    <property type="evidence" value="ECO:0007669"/>
    <property type="project" value="UniProtKB-KW"/>
</dbReference>
<dbReference type="GO" id="GO:0090729">
    <property type="term" value="F:toxin activity"/>
    <property type="evidence" value="ECO:0007669"/>
    <property type="project" value="UniProtKB-KW"/>
</dbReference>
<dbReference type="CDD" id="cd00206">
    <property type="entry name" value="TFP_snake_toxin"/>
    <property type="match status" value="1"/>
</dbReference>
<dbReference type="FunFam" id="2.10.60.10:FF:000024">
    <property type="entry name" value="Cytotoxin 1"/>
    <property type="match status" value="1"/>
</dbReference>
<dbReference type="Gene3D" id="2.10.60.10">
    <property type="entry name" value="CD59"/>
    <property type="match status" value="1"/>
</dbReference>
<dbReference type="InterPro" id="IPR003571">
    <property type="entry name" value="Snake_3FTx"/>
</dbReference>
<dbReference type="InterPro" id="IPR045860">
    <property type="entry name" value="Snake_toxin-like_sf"/>
</dbReference>
<dbReference type="InterPro" id="IPR018354">
    <property type="entry name" value="Snake_toxin_con_site"/>
</dbReference>
<dbReference type="InterPro" id="IPR054131">
    <property type="entry name" value="Toxin_cobra-type"/>
</dbReference>
<dbReference type="Pfam" id="PF21947">
    <property type="entry name" value="Toxin_cobra-type"/>
    <property type="match status" value="1"/>
</dbReference>
<dbReference type="SUPFAM" id="SSF57302">
    <property type="entry name" value="Snake toxin-like"/>
    <property type="match status" value="1"/>
</dbReference>
<dbReference type="PROSITE" id="PS00272">
    <property type="entry name" value="SNAKE_TOXIN"/>
    <property type="match status" value="1"/>
</dbReference>
<comment type="function">
    <text evidence="2">Binds with low affinity to muscular (alpha-1-beta-1-delta-epsilon/CHRNA1-CHRNB1-CHRND-CHRNE) and very low affinity to neuronal (alpha-7/CHRNA7) nicotinic acetylcholine receptor (nAChR).</text>
</comment>
<comment type="subcellular location">
    <subcellularLocation>
        <location evidence="1">Secreted</location>
    </subcellularLocation>
</comment>
<comment type="tissue specificity">
    <text evidence="5">Expressed by the venom gland.</text>
</comment>
<comment type="similarity">
    <text evidence="5">Belongs to the three-finger toxin family. Ancestral subfamily. Orphan group II sub-subfamily.</text>
</comment>
<sequence length="81" mass="9067">LTLVVVTIVCLDLGYTLTCLICPEEYCKRIHTCRDGENVCFKGFYEGKQLGKQFRRGCAATCPEGKPNEIVQCCSTDECNH</sequence>
<proteinExistence type="evidence at transcript level"/>
<accession>Q53B61</accession>
<evidence type="ECO:0000250" key="1"/>
<evidence type="ECO:0000250" key="2">
    <source>
        <dbReference type="UniProtKB" id="O42255"/>
    </source>
</evidence>
<evidence type="ECO:0000250" key="3">
    <source>
        <dbReference type="UniProtKB" id="Q8AY51"/>
    </source>
</evidence>
<evidence type="ECO:0000255" key="4"/>
<evidence type="ECO:0000305" key="5"/>
<name>3NO2_OPHHA</name>
<organism>
    <name type="scientific">Ophiophagus hannah</name>
    <name type="common">King cobra</name>
    <name type="synonym">Naja hannah</name>
    <dbReference type="NCBI Taxonomy" id="8665"/>
    <lineage>
        <taxon>Eukaryota</taxon>
        <taxon>Metazoa</taxon>
        <taxon>Chordata</taxon>
        <taxon>Craniata</taxon>
        <taxon>Vertebrata</taxon>
        <taxon>Euteleostomi</taxon>
        <taxon>Lepidosauria</taxon>
        <taxon>Squamata</taxon>
        <taxon>Bifurcata</taxon>
        <taxon>Unidentata</taxon>
        <taxon>Episquamata</taxon>
        <taxon>Toxicofera</taxon>
        <taxon>Serpentes</taxon>
        <taxon>Colubroidea</taxon>
        <taxon>Elapidae</taxon>
        <taxon>Elapinae</taxon>
        <taxon>Ophiophagus</taxon>
    </lineage>
</organism>
<feature type="signal peptide" evidence="4">
    <location>
        <begin position="1" status="less than"/>
        <end position="16"/>
    </location>
</feature>
<feature type="chain" id="PRO_5000093318" description="Weak neurotoxin OH-72">
    <location>
        <begin position="17"/>
        <end position="81"/>
    </location>
</feature>
<feature type="disulfide bond" evidence="3">
    <location>
        <begin position="19"/>
        <end position="40"/>
    </location>
</feature>
<feature type="disulfide bond" evidence="3">
    <location>
        <begin position="22"/>
        <end position="27"/>
    </location>
</feature>
<feature type="disulfide bond" evidence="3">
    <location>
        <begin position="33"/>
        <end position="58"/>
    </location>
</feature>
<feature type="disulfide bond" evidence="3">
    <location>
        <begin position="62"/>
        <end position="73"/>
    </location>
</feature>
<feature type="disulfide bond" evidence="3">
    <location>
        <begin position="74"/>
        <end position="79"/>
    </location>
</feature>
<feature type="non-terminal residue">
    <location>
        <position position="1"/>
    </location>
</feature>